<sequence>MSAQNYHAGLHQSSTQRPPKRPNTEHAQEPPKRALIGGQTTPSSSGGGQTPNGTNYELEVKQQLSNYQKLFDQATYPFIRDVSTYEKLNKIGQGTFGEVFKARCKNTGRMVALKKILMENEKEGFPITALREVKMLEQLKHPNITDLIEVCSAKSTGTTGSKDRATFYLVMALCAHDLAGLLSNPKIRMSLVHIKTMMKHLMSGLNKLHRSKILHRDMKAANVLISKDGILKLADFGLARPFVQRENGAGPRPLYTNRVVTLWYRPPELLLGDRQYGTKIDVWGAGCIMAEMWTRQPIMQGDTEQKQLQLISGLCGSINKDVWPNCVNMPLWSAMSSEPNSALPQGKYRILPNKMKNLMKFDAPDSKTDPFGKNVKQHDSATDDDALHLLEILLAIDPDKRPTSDEAEDDIWFFKDPVPMANVQDLMDTIPNSQFEYTVGKGAHANRGRHQNAQQRPNQQQARPSNAIPAGQYRDTIF</sequence>
<protein>
    <recommendedName>
        <fullName>Probable cyclin-dependent kinase 9</fullName>
        <ecNumber>2.7.11.22</ecNumber>
        <ecNumber>2.7.11.23</ecNumber>
    </recommendedName>
    <alternativeName>
        <fullName>Cell division protein kinase 9</fullName>
    </alternativeName>
</protein>
<gene>
    <name type="primary">cdk-9</name>
    <name type="ORF">H25P06.2</name>
</gene>
<evidence type="ECO:0000250" key="1"/>
<evidence type="ECO:0000255" key="2">
    <source>
        <dbReference type="PROSITE-ProRule" id="PRU00159"/>
    </source>
</evidence>
<evidence type="ECO:0000255" key="3">
    <source>
        <dbReference type="PROSITE-ProRule" id="PRU10027"/>
    </source>
</evidence>
<evidence type="ECO:0000256" key="4">
    <source>
        <dbReference type="SAM" id="MobiDB-lite"/>
    </source>
</evidence>
<evidence type="ECO:0000269" key="5">
    <source>
    </source>
</evidence>
<evidence type="ECO:0000305" key="6"/>
<accession>Q9TVL3</accession>
<accession>Q9XTH5</accession>
<reference key="1">
    <citation type="journal article" date="1998" name="Science">
        <title>Genome sequence of the nematode C. elegans: a platform for investigating biology.</title>
        <authorList>
            <consortium name="The C. elegans sequencing consortium"/>
        </authorList>
    </citation>
    <scope>NUCLEOTIDE SEQUENCE [LARGE SCALE GENOMIC DNA]</scope>
    <scope>ALTERNATIVE SPLICING</scope>
    <source>
        <strain>Bristol N2</strain>
    </source>
</reference>
<reference key="2">
    <citation type="journal article" date="2002" name="Genes Dev.">
        <title>CDK-9/cyclin T (P-TEFb) is required in two postinitiation pathways for transcription in the C. elegans embryo.</title>
        <authorList>
            <person name="Shim E.Y."/>
            <person name="Walker A.K."/>
            <person name="Shi Y."/>
            <person name="Blackwell T.K."/>
        </authorList>
    </citation>
    <scope>FUNCTION</scope>
    <scope>SUBCELLULAR LOCATION</scope>
</reference>
<feature type="chain" id="PRO_0000085807" description="Probable cyclin-dependent kinase 9">
    <location>
        <begin position="1"/>
        <end position="478"/>
    </location>
</feature>
<feature type="domain" description="Protein kinase" evidence="2">
    <location>
        <begin position="85"/>
        <end position="413"/>
    </location>
</feature>
<feature type="region of interest" description="Disordered" evidence="4">
    <location>
        <begin position="1"/>
        <end position="55"/>
    </location>
</feature>
<feature type="region of interest" description="Disordered" evidence="4">
    <location>
        <begin position="444"/>
        <end position="478"/>
    </location>
</feature>
<feature type="compositionally biased region" description="Polar residues" evidence="4">
    <location>
        <begin position="1"/>
        <end position="17"/>
    </location>
</feature>
<feature type="compositionally biased region" description="Basic and acidic residues" evidence="4">
    <location>
        <begin position="22"/>
        <end position="32"/>
    </location>
</feature>
<feature type="compositionally biased region" description="Low complexity" evidence="4">
    <location>
        <begin position="451"/>
        <end position="464"/>
    </location>
</feature>
<feature type="active site" description="Proton acceptor" evidence="2 3">
    <location>
        <position position="217"/>
    </location>
</feature>
<feature type="binding site" evidence="2">
    <location>
        <begin position="91"/>
        <end position="99"/>
    </location>
    <ligand>
        <name>ATP</name>
        <dbReference type="ChEBI" id="CHEBI:30616"/>
    </ligand>
</feature>
<feature type="binding site" evidence="2">
    <location>
        <position position="114"/>
    </location>
    <ligand>
        <name>ATP</name>
        <dbReference type="ChEBI" id="CHEBI:30616"/>
    </ligand>
</feature>
<feature type="splice variant" id="VSP_016291" description="In isoform a." evidence="6">
    <original>NSQFEYTVGKGAHA</original>
    <variation>VRKFEAKWLKKREK</variation>
    <location>
        <begin position="432"/>
        <end position="445"/>
    </location>
</feature>
<feature type="splice variant" id="VSP_016292" description="In isoform a." evidence="6">
    <location>
        <begin position="446"/>
        <end position="478"/>
    </location>
</feature>
<proteinExistence type="inferred from homology"/>
<keyword id="KW-0025">Alternative splicing</keyword>
<keyword id="KW-0067">ATP-binding</keyword>
<keyword id="KW-0418">Kinase</keyword>
<keyword id="KW-0547">Nucleotide-binding</keyword>
<keyword id="KW-0539">Nucleus</keyword>
<keyword id="KW-1185">Reference proteome</keyword>
<keyword id="KW-0723">Serine/threonine-protein kinase</keyword>
<keyword id="KW-0804">Transcription</keyword>
<keyword id="KW-0805">Transcription regulation</keyword>
<keyword id="KW-0808">Transferase</keyword>
<comment type="function">
    <text evidence="5">Essential member of the cyclin-dependent kinase pair (CDK9/cyclin-T) complex, also called positive transcription elongation factor B (P-TEFb), which is proposed to facilitate the transition from abortive to production elongation by phosphorylating the CTD (C-terminal domain) of the large subunit of RNA polymerase II (RNAP II) and spt-5.</text>
</comment>
<comment type="catalytic activity">
    <reaction>
        <text>L-seryl-[protein] + ATP = O-phospho-L-seryl-[protein] + ADP + H(+)</text>
        <dbReference type="Rhea" id="RHEA:17989"/>
        <dbReference type="Rhea" id="RHEA-COMP:9863"/>
        <dbReference type="Rhea" id="RHEA-COMP:11604"/>
        <dbReference type="ChEBI" id="CHEBI:15378"/>
        <dbReference type="ChEBI" id="CHEBI:29999"/>
        <dbReference type="ChEBI" id="CHEBI:30616"/>
        <dbReference type="ChEBI" id="CHEBI:83421"/>
        <dbReference type="ChEBI" id="CHEBI:456216"/>
        <dbReference type="EC" id="2.7.11.22"/>
    </reaction>
</comment>
<comment type="catalytic activity">
    <reaction>
        <text>L-threonyl-[protein] + ATP = O-phospho-L-threonyl-[protein] + ADP + H(+)</text>
        <dbReference type="Rhea" id="RHEA:46608"/>
        <dbReference type="Rhea" id="RHEA-COMP:11060"/>
        <dbReference type="Rhea" id="RHEA-COMP:11605"/>
        <dbReference type="ChEBI" id="CHEBI:15378"/>
        <dbReference type="ChEBI" id="CHEBI:30013"/>
        <dbReference type="ChEBI" id="CHEBI:30616"/>
        <dbReference type="ChEBI" id="CHEBI:61977"/>
        <dbReference type="ChEBI" id="CHEBI:456216"/>
        <dbReference type="EC" id="2.7.11.22"/>
    </reaction>
</comment>
<comment type="catalytic activity">
    <reaction>
        <text>[DNA-directed RNA polymerase] + ATP = phospho-[DNA-directed RNA polymerase] + ADP + H(+)</text>
        <dbReference type="Rhea" id="RHEA:10216"/>
        <dbReference type="Rhea" id="RHEA-COMP:11321"/>
        <dbReference type="Rhea" id="RHEA-COMP:11322"/>
        <dbReference type="ChEBI" id="CHEBI:15378"/>
        <dbReference type="ChEBI" id="CHEBI:30616"/>
        <dbReference type="ChEBI" id="CHEBI:43176"/>
        <dbReference type="ChEBI" id="CHEBI:68546"/>
        <dbReference type="ChEBI" id="CHEBI:456216"/>
        <dbReference type="EC" id="2.7.11.23"/>
    </reaction>
</comment>
<comment type="subunit">
    <text evidence="1">Associates with cyclin-T (cit-1.1 or cit-1.2) to form P-TEFb.</text>
</comment>
<comment type="subcellular location">
    <subcellularLocation>
        <location evidence="5">Nucleus</location>
    </subcellularLocation>
</comment>
<comment type="alternative products">
    <event type="alternative splicing"/>
    <isoform>
        <id>Q9TVL3-1</id>
        <name>b</name>
        <sequence type="displayed"/>
    </isoform>
    <isoform>
        <id>Q9TVL3-2</id>
        <name>a</name>
        <sequence type="described" ref="VSP_016291 VSP_016292"/>
    </isoform>
</comment>
<comment type="similarity">
    <text evidence="6">Belongs to the protein kinase superfamily. CMGC Ser/Thr protein kinase family. CDC2/CDKX subfamily.</text>
</comment>
<dbReference type="EC" id="2.7.11.22"/>
<dbReference type="EC" id="2.7.11.23"/>
<dbReference type="EMBL" id="Z92797">
    <property type="protein sequence ID" value="CAB07237.2"/>
    <property type="molecule type" value="Genomic_DNA"/>
</dbReference>
<dbReference type="EMBL" id="Z83118">
    <property type="protein sequence ID" value="CAB07237.2"/>
    <property type="status" value="JOINED"/>
    <property type="molecule type" value="Genomic_DNA"/>
</dbReference>
<dbReference type="EMBL" id="Z92797">
    <property type="protein sequence ID" value="CAB07238.3"/>
    <property type="molecule type" value="Genomic_DNA"/>
</dbReference>
<dbReference type="EMBL" id="Z83118">
    <property type="protein sequence ID" value="CAB07238.3"/>
    <property type="status" value="JOINED"/>
    <property type="molecule type" value="Genomic_DNA"/>
</dbReference>
<dbReference type="PIR" id="F87920">
    <property type="entry name" value="F87920"/>
</dbReference>
<dbReference type="PIR" id="T23123">
    <property type="entry name" value="T23123"/>
</dbReference>
<dbReference type="PIR" id="T23124">
    <property type="entry name" value="T23124"/>
</dbReference>
<dbReference type="RefSeq" id="NP_492906.2">
    <molecule id="Q9TVL3-1"/>
    <property type="nucleotide sequence ID" value="NM_060505.4"/>
</dbReference>
<dbReference type="RefSeq" id="NP_492907.2">
    <molecule id="Q9TVL3-2"/>
    <property type="nucleotide sequence ID" value="NM_060506.5"/>
</dbReference>
<dbReference type="SMR" id="Q9TVL3"/>
<dbReference type="BioGRID" id="38431">
    <property type="interactions" value="4"/>
</dbReference>
<dbReference type="FunCoup" id="Q9TVL3">
    <property type="interactions" value="3112"/>
</dbReference>
<dbReference type="IntAct" id="Q9TVL3">
    <property type="interactions" value="2"/>
</dbReference>
<dbReference type="STRING" id="6239.H25P06.2b.1"/>
<dbReference type="iPTMnet" id="Q9TVL3"/>
<dbReference type="PaxDb" id="6239-H25P06.2b"/>
<dbReference type="PeptideAtlas" id="Q9TVL3"/>
<dbReference type="EnsemblMetazoa" id="H25P06.2a.1">
    <molecule id="Q9TVL3-2"/>
    <property type="protein sequence ID" value="H25P06.2a.1"/>
    <property type="gene ID" value="WBGene00000410"/>
</dbReference>
<dbReference type="EnsemblMetazoa" id="H25P06.2b.1">
    <molecule id="Q9TVL3-1"/>
    <property type="protein sequence ID" value="H25P06.2b.1"/>
    <property type="gene ID" value="WBGene00000410"/>
</dbReference>
<dbReference type="GeneID" id="173023"/>
<dbReference type="KEGG" id="cel:CELE_H25P06.2"/>
<dbReference type="UCSC" id="H25P06.2b">
    <molecule id="Q9TVL3-1"/>
    <property type="organism name" value="c. elegans"/>
</dbReference>
<dbReference type="AGR" id="WB:WBGene00000410"/>
<dbReference type="CTD" id="173023"/>
<dbReference type="WormBase" id="H25P06.2a">
    <molecule id="Q9TVL3-2"/>
    <property type="protein sequence ID" value="CE37838"/>
    <property type="gene ID" value="WBGene00000410"/>
    <property type="gene designation" value="cdk-9"/>
</dbReference>
<dbReference type="WormBase" id="H25P06.2b">
    <molecule id="Q9TVL3-1"/>
    <property type="protein sequence ID" value="CE37839"/>
    <property type="gene ID" value="WBGene00000410"/>
    <property type="gene designation" value="cdk-9"/>
</dbReference>
<dbReference type="eggNOG" id="KOG0669">
    <property type="taxonomic scope" value="Eukaryota"/>
</dbReference>
<dbReference type="GeneTree" id="ENSGT00940000155373"/>
<dbReference type="InParanoid" id="Q9TVL3"/>
<dbReference type="OMA" id="DALDHDY"/>
<dbReference type="OrthoDB" id="204883at2759"/>
<dbReference type="PhylomeDB" id="Q9TVL3"/>
<dbReference type="Reactome" id="R-CEL-112382">
    <property type="pathway name" value="Formation of RNA Pol II elongation complex"/>
</dbReference>
<dbReference type="Reactome" id="R-CEL-2173796">
    <property type="pathway name" value="SMAD2/SMAD3:SMAD4 heterotrimer regulates transcription"/>
</dbReference>
<dbReference type="Reactome" id="R-CEL-674695">
    <property type="pathway name" value="RNA Polymerase II Pre-transcription Events"/>
</dbReference>
<dbReference type="Reactome" id="R-CEL-6796648">
    <property type="pathway name" value="TP53 Regulates Transcription of DNA Repair Genes"/>
</dbReference>
<dbReference type="Reactome" id="R-CEL-6807505">
    <property type="pathway name" value="RNA polymerase II transcribes snRNA genes"/>
</dbReference>
<dbReference type="Reactome" id="R-CEL-75955">
    <property type="pathway name" value="RNA Polymerase II Transcription Elongation"/>
</dbReference>
<dbReference type="Reactome" id="R-CEL-9018519">
    <property type="pathway name" value="Estrogen-dependent gene expression"/>
</dbReference>
<dbReference type="PRO" id="PR:Q9TVL3"/>
<dbReference type="Proteomes" id="UP000001940">
    <property type="component" value="Chromosome I"/>
</dbReference>
<dbReference type="Bgee" id="WBGene00000410">
    <property type="expression patterns" value="Expressed in germ line (C elegans) and 4 other cell types or tissues"/>
</dbReference>
<dbReference type="GO" id="GO:0000791">
    <property type="term" value="C:euchromatin"/>
    <property type="evidence" value="ECO:0000314"/>
    <property type="project" value="WormBase"/>
</dbReference>
<dbReference type="GO" id="GO:0005634">
    <property type="term" value="C:nucleus"/>
    <property type="evidence" value="ECO:0000318"/>
    <property type="project" value="GO_Central"/>
</dbReference>
<dbReference type="GO" id="GO:0005524">
    <property type="term" value="F:ATP binding"/>
    <property type="evidence" value="ECO:0007669"/>
    <property type="project" value="UniProtKB-KW"/>
</dbReference>
<dbReference type="GO" id="GO:0004693">
    <property type="term" value="F:cyclin-dependent protein serine/threonine kinase activity"/>
    <property type="evidence" value="ECO:0000318"/>
    <property type="project" value="GO_Central"/>
</dbReference>
<dbReference type="GO" id="GO:0106310">
    <property type="term" value="F:protein serine kinase activity"/>
    <property type="evidence" value="ECO:0007669"/>
    <property type="project" value="RHEA"/>
</dbReference>
<dbReference type="GO" id="GO:0008353">
    <property type="term" value="F:RNA polymerase II CTD heptapeptide repeat kinase activity"/>
    <property type="evidence" value="ECO:0000318"/>
    <property type="project" value="GO_Central"/>
</dbReference>
<dbReference type="GO" id="GO:0009792">
    <property type="term" value="P:embryo development ending in birth or egg hatching"/>
    <property type="evidence" value="ECO:0000315"/>
    <property type="project" value="UniProtKB"/>
</dbReference>
<dbReference type="GO" id="GO:0007281">
    <property type="term" value="P:germ cell development"/>
    <property type="evidence" value="ECO:0000315"/>
    <property type="project" value="UniProtKB"/>
</dbReference>
<dbReference type="GO" id="GO:0002119">
    <property type="term" value="P:nematode larval development"/>
    <property type="evidence" value="ECO:0000315"/>
    <property type="project" value="UniProtKB"/>
</dbReference>
<dbReference type="GO" id="GO:0032968">
    <property type="term" value="P:positive regulation of transcription elongation by RNA polymerase II"/>
    <property type="evidence" value="ECO:0000318"/>
    <property type="project" value="GO_Central"/>
</dbReference>
<dbReference type="CDD" id="cd07865">
    <property type="entry name" value="STKc_CDK9"/>
    <property type="match status" value="1"/>
</dbReference>
<dbReference type="FunFam" id="3.30.200.20:FF:000124">
    <property type="entry name" value="Cyclin-dependent kinase 4"/>
    <property type="match status" value="1"/>
</dbReference>
<dbReference type="FunFam" id="1.10.510.10:FF:001715">
    <property type="entry name" value="Probable cyclin-dependent kinase 9"/>
    <property type="match status" value="1"/>
</dbReference>
<dbReference type="Gene3D" id="3.30.200.20">
    <property type="entry name" value="Phosphorylase Kinase, domain 1"/>
    <property type="match status" value="1"/>
</dbReference>
<dbReference type="Gene3D" id="1.10.510.10">
    <property type="entry name" value="Transferase(Phosphotransferase) domain 1"/>
    <property type="match status" value="1"/>
</dbReference>
<dbReference type="InterPro" id="IPR050108">
    <property type="entry name" value="CDK"/>
</dbReference>
<dbReference type="InterPro" id="IPR011009">
    <property type="entry name" value="Kinase-like_dom_sf"/>
</dbReference>
<dbReference type="InterPro" id="IPR000719">
    <property type="entry name" value="Prot_kinase_dom"/>
</dbReference>
<dbReference type="InterPro" id="IPR017441">
    <property type="entry name" value="Protein_kinase_ATP_BS"/>
</dbReference>
<dbReference type="InterPro" id="IPR008271">
    <property type="entry name" value="Ser/Thr_kinase_AS"/>
</dbReference>
<dbReference type="PANTHER" id="PTHR24056">
    <property type="entry name" value="CELL DIVISION PROTEIN KINASE"/>
    <property type="match status" value="1"/>
</dbReference>
<dbReference type="PANTHER" id="PTHR24056:SF233">
    <property type="entry name" value="CYCLIN-DEPENDENT KINASE 9"/>
    <property type="match status" value="1"/>
</dbReference>
<dbReference type="Pfam" id="PF00069">
    <property type="entry name" value="Pkinase"/>
    <property type="match status" value="1"/>
</dbReference>
<dbReference type="SMART" id="SM00220">
    <property type="entry name" value="S_TKc"/>
    <property type="match status" value="1"/>
</dbReference>
<dbReference type="SUPFAM" id="SSF56112">
    <property type="entry name" value="Protein kinase-like (PK-like)"/>
    <property type="match status" value="1"/>
</dbReference>
<dbReference type="PROSITE" id="PS00107">
    <property type="entry name" value="PROTEIN_KINASE_ATP"/>
    <property type="match status" value="1"/>
</dbReference>
<dbReference type="PROSITE" id="PS50011">
    <property type="entry name" value="PROTEIN_KINASE_DOM"/>
    <property type="match status" value="1"/>
</dbReference>
<dbReference type="PROSITE" id="PS00108">
    <property type="entry name" value="PROTEIN_KINASE_ST"/>
    <property type="match status" value="1"/>
</dbReference>
<name>CDK9_CAEEL</name>
<organism>
    <name type="scientific">Caenorhabditis elegans</name>
    <dbReference type="NCBI Taxonomy" id="6239"/>
    <lineage>
        <taxon>Eukaryota</taxon>
        <taxon>Metazoa</taxon>
        <taxon>Ecdysozoa</taxon>
        <taxon>Nematoda</taxon>
        <taxon>Chromadorea</taxon>
        <taxon>Rhabditida</taxon>
        <taxon>Rhabditina</taxon>
        <taxon>Rhabditomorpha</taxon>
        <taxon>Rhabditoidea</taxon>
        <taxon>Rhabditidae</taxon>
        <taxon>Peloderinae</taxon>
        <taxon>Caenorhabditis</taxon>
    </lineage>
</organism>